<gene>
    <name evidence="1" type="primary">parC</name>
    <name type="ordered locus">SPs1228</name>
</gene>
<reference key="1">
    <citation type="journal article" date="2003" name="Genome Res.">
        <title>Genome sequence of an M3 strain of Streptococcus pyogenes reveals a large-scale genomic rearrangement in invasive strains and new insights into phage evolution.</title>
        <authorList>
            <person name="Nakagawa I."/>
            <person name="Kurokawa K."/>
            <person name="Yamashita A."/>
            <person name="Nakata M."/>
            <person name="Tomiyasu Y."/>
            <person name="Okahashi N."/>
            <person name="Kawabata S."/>
            <person name="Yamazaki K."/>
            <person name="Shiba T."/>
            <person name="Yasunaga T."/>
            <person name="Hayashi H."/>
            <person name="Hattori M."/>
            <person name="Hamada S."/>
        </authorList>
    </citation>
    <scope>NUCLEOTIDE SEQUENCE [LARGE SCALE GENOMIC DNA]</scope>
    <source>
        <strain>SSI-1</strain>
    </source>
</reference>
<proteinExistence type="inferred from homology"/>
<accession>P0DG07</accession>
<accession>Q878K1</accession>
<accession>Q8K7U6</accession>
<keyword id="KW-1003">Cell membrane</keyword>
<keyword id="KW-0238">DNA-binding</keyword>
<keyword id="KW-0413">Isomerase</keyword>
<keyword id="KW-0472">Membrane</keyword>
<keyword id="KW-0799">Topoisomerase</keyword>
<evidence type="ECO:0000255" key="1">
    <source>
        <dbReference type="HAMAP-Rule" id="MF_00937"/>
    </source>
</evidence>
<evidence type="ECO:0000255" key="2">
    <source>
        <dbReference type="PROSITE-ProRule" id="PRU01384"/>
    </source>
</evidence>
<evidence type="ECO:0000305" key="3"/>
<name>PARC_STRPQ</name>
<sequence>MSNIQNMSLEDIMGERFGRYSKYIIQERALPDIRDGLKPVQRRILYSMNKDGNTFEKGYRKSAKSVGNIMGNFHPHGDFSIYDAMVRMSQDWKNREILVEMHGNNGSMDGDPPAAMRYTEARLSEIAGYLLQDIEKNTVSFAWNFDDTEKEPTVLPAAFPNLLVNGSSGISAGYATDIPPHNLSEVIDAVVYMIDHPKASLEKLMEFLPGPDFPTGGIIQGADEIKKAYETGKGRVVVRSRTEIEELKGGKQQIIVTEIPYEVNKAVLVKKIDDVRVNNKVPGIVEVRDESDRTGLRIAIELKKEADSQTILNYLLKYTDLQVNYNFNMVAIDHFTPRQVGLQKILSSYISHRKDIIIERSKFDKAKAEKRLHIVEGLIRVLSILDEIIALIRSSDNKADAKENLKVSYDFSEEQAEAIVTLQLYRLTNTDIVTLQNEENDLRDLITTLSAIIGDEATMYNVMKRELREVKKKFANPRLSELQAESQIIEIDTASLIAEEETFVSVTRGGYLKRTSPRSFNASSLEEVGKRDDDELIFVKQAKTTEHLLLFTTLGNVIYRPIHELTDLRWKDIGEHLSQTISNFATEEEILYADIVTSFDQGLYVAVTQNGFIKRFDRKELSPWRTYKSKSTKYVKLKDDKDRVVTLSPVIMEDLLLVTKNGYALRFSSQEVPIQGLKSAGVKGINLKNDDSLASAFAVTSNSFFVLTQRGSLKRMAVDDIPQTSRANRGLLVLRELKTKPHRVFLAGGVQSDTSAEQFDLFTDIPEEETNQQMLEVISKTGQTYEIALETLSLSERTSNGSFISDTISDQEVLVARTR</sequence>
<organism>
    <name type="scientific">Streptococcus pyogenes serotype M3 (strain SSI-1)</name>
    <dbReference type="NCBI Taxonomy" id="193567"/>
    <lineage>
        <taxon>Bacteria</taxon>
        <taxon>Bacillati</taxon>
        <taxon>Bacillota</taxon>
        <taxon>Bacilli</taxon>
        <taxon>Lactobacillales</taxon>
        <taxon>Streptococcaceae</taxon>
        <taxon>Streptococcus</taxon>
    </lineage>
</organism>
<dbReference type="EC" id="5.6.2.2" evidence="1"/>
<dbReference type="EMBL" id="BA000034">
    <property type="protein sequence ID" value="BAC64323.1"/>
    <property type="status" value="ALT_INIT"/>
    <property type="molecule type" value="Genomic_DNA"/>
</dbReference>
<dbReference type="RefSeq" id="WP_041174279.1">
    <property type="nucleotide sequence ID" value="NC_004606.1"/>
</dbReference>
<dbReference type="SMR" id="P0DG07"/>
<dbReference type="KEGG" id="sps:SPs1228"/>
<dbReference type="HOGENOM" id="CLU_002977_6_1_9"/>
<dbReference type="GO" id="GO:0005694">
    <property type="term" value="C:chromosome"/>
    <property type="evidence" value="ECO:0007669"/>
    <property type="project" value="InterPro"/>
</dbReference>
<dbReference type="GO" id="GO:0005737">
    <property type="term" value="C:cytoplasm"/>
    <property type="evidence" value="ECO:0007669"/>
    <property type="project" value="TreeGrafter"/>
</dbReference>
<dbReference type="GO" id="GO:0009330">
    <property type="term" value="C:DNA topoisomerase type II (double strand cut, ATP-hydrolyzing) complex"/>
    <property type="evidence" value="ECO:0007669"/>
    <property type="project" value="TreeGrafter"/>
</dbReference>
<dbReference type="GO" id="GO:0019897">
    <property type="term" value="C:extrinsic component of plasma membrane"/>
    <property type="evidence" value="ECO:0007669"/>
    <property type="project" value="UniProtKB-UniRule"/>
</dbReference>
<dbReference type="GO" id="GO:0005524">
    <property type="term" value="F:ATP binding"/>
    <property type="evidence" value="ECO:0007669"/>
    <property type="project" value="InterPro"/>
</dbReference>
<dbReference type="GO" id="GO:0003677">
    <property type="term" value="F:DNA binding"/>
    <property type="evidence" value="ECO:0007669"/>
    <property type="project" value="UniProtKB-UniRule"/>
</dbReference>
<dbReference type="GO" id="GO:0034335">
    <property type="term" value="F:DNA negative supercoiling activity"/>
    <property type="evidence" value="ECO:0007669"/>
    <property type="project" value="UniProtKB-ARBA"/>
</dbReference>
<dbReference type="GO" id="GO:0007059">
    <property type="term" value="P:chromosome segregation"/>
    <property type="evidence" value="ECO:0007669"/>
    <property type="project" value="UniProtKB-UniRule"/>
</dbReference>
<dbReference type="GO" id="GO:0006265">
    <property type="term" value="P:DNA topological change"/>
    <property type="evidence" value="ECO:0007669"/>
    <property type="project" value="UniProtKB-UniRule"/>
</dbReference>
<dbReference type="CDD" id="cd00187">
    <property type="entry name" value="TOP4c"/>
    <property type="match status" value="1"/>
</dbReference>
<dbReference type="FunFam" id="1.10.268.10:FF:000001">
    <property type="entry name" value="DNA gyrase subunit A"/>
    <property type="match status" value="1"/>
</dbReference>
<dbReference type="FunFam" id="3.30.1360.40:FF:000002">
    <property type="entry name" value="DNA gyrase subunit A"/>
    <property type="match status" value="1"/>
</dbReference>
<dbReference type="FunFam" id="3.90.199.10:FF:000001">
    <property type="entry name" value="DNA gyrase subunit A"/>
    <property type="match status" value="1"/>
</dbReference>
<dbReference type="FunFam" id="2.120.10.90:FF:000005">
    <property type="entry name" value="DNA topoisomerase 4 subunit A"/>
    <property type="match status" value="1"/>
</dbReference>
<dbReference type="Gene3D" id="3.30.1360.40">
    <property type="match status" value="1"/>
</dbReference>
<dbReference type="Gene3D" id="2.120.10.90">
    <property type="entry name" value="DNA gyrase/topoisomerase IV, subunit A, C-terminal"/>
    <property type="match status" value="1"/>
</dbReference>
<dbReference type="Gene3D" id="3.90.199.10">
    <property type="entry name" value="Topoisomerase II, domain 5"/>
    <property type="match status" value="1"/>
</dbReference>
<dbReference type="Gene3D" id="1.10.268.10">
    <property type="entry name" value="Topoisomerase, domain 3"/>
    <property type="match status" value="1"/>
</dbReference>
<dbReference type="HAMAP" id="MF_00937">
    <property type="entry name" value="ParC_type2"/>
    <property type="match status" value="1"/>
</dbReference>
<dbReference type="InterPro" id="IPR006691">
    <property type="entry name" value="GyrA/parC_rep"/>
</dbReference>
<dbReference type="InterPro" id="IPR035516">
    <property type="entry name" value="Gyrase/topoIV_suA_C"/>
</dbReference>
<dbReference type="InterPro" id="IPR013760">
    <property type="entry name" value="Topo_IIA-like_dom_sf"/>
</dbReference>
<dbReference type="InterPro" id="IPR013758">
    <property type="entry name" value="Topo_IIA_A/C_ab"/>
</dbReference>
<dbReference type="InterPro" id="IPR013757">
    <property type="entry name" value="Topo_IIA_A_a_sf"/>
</dbReference>
<dbReference type="InterPro" id="IPR002205">
    <property type="entry name" value="Topo_IIA_dom_A"/>
</dbReference>
<dbReference type="InterPro" id="IPR005741">
    <property type="entry name" value="TopoIV_A_Gpos"/>
</dbReference>
<dbReference type="InterPro" id="IPR050220">
    <property type="entry name" value="Type_II_DNA_Topoisomerases"/>
</dbReference>
<dbReference type="NCBIfam" id="TIGR01061">
    <property type="entry name" value="parC_Gpos"/>
    <property type="match status" value="1"/>
</dbReference>
<dbReference type="NCBIfam" id="NF004044">
    <property type="entry name" value="PRK05561.1"/>
    <property type="match status" value="1"/>
</dbReference>
<dbReference type="PANTHER" id="PTHR43493">
    <property type="entry name" value="DNA GYRASE/TOPOISOMERASE SUBUNIT A"/>
    <property type="match status" value="1"/>
</dbReference>
<dbReference type="PANTHER" id="PTHR43493:SF9">
    <property type="entry name" value="DNA TOPOISOMERASE 4 SUBUNIT A"/>
    <property type="match status" value="1"/>
</dbReference>
<dbReference type="Pfam" id="PF03989">
    <property type="entry name" value="DNA_gyraseA_C"/>
    <property type="match status" value="4"/>
</dbReference>
<dbReference type="Pfam" id="PF00521">
    <property type="entry name" value="DNA_topoisoIV"/>
    <property type="match status" value="1"/>
</dbReference>
<dbReference type="SMART" id="SM00434">
    <property type="entry name" value="TOP4c"/>
    <property type="match status" value="1"/>
</dbReference>
<dbReference type="SUPFAM" id="SSF101904">
    <property type="entry name" value="GyrA/ParC C-terminal domain-like"/>
    <property type="match status" value="1"/>
</dbReference>
<dbReference type="SUPFAM" id="SSF56719">
    <property type="entry name" value="Type II DNA topoisomerase"/>
    <property type="match status" value="1"/>
</dbReference>
<dbReference type="PROSITE" id="PS52040">
    <property type="entry name" value="TOPO_IIA"/>
    <property type="match status" value="1"/>
</dbReference>
<protein>
    <recommendedName>
        <fullName evidence="1">DNA topoisomerase 4 subunit A</fullName>
        <ecNumber evidence="1">5.6.2.2</ecNumber>
    </recommendedName>
    <alternativeName>
        <fullName evidence="1">Topoisomerase IV subunit A</fullName>
    </alternativeName>
</protein>
<comment type="function">
    <text evidence="1">Topoisomerase IV is essential for chromosome segregation. It relaxes supercoiled DNA. Performs the decatenation events required during the replication of a circular DNA molecule.</text>
</comment>
<comment type="catalytic activity">
    <reaction evidence="1">
        <text>ATP-dependent breakage, passage and rejoining of double-stranded DNA.</text>
        <dbReference type="EC" id="5.6.2.2"/>
    </reaction>
</comment>
<comment type="subunit">
    <text evidence="1">Heterotetramer composed of ParC and ParE.</text>
</comment>
<comment type="subcellular location">
    <subcellularLocation>
        <location evidence="1">Cell membrane</location>
        <topology evidence="1">Peripheral membrane protein</topology>
    </subcellularLocation>
</comment>
<comment type="similarity">
    <text evidence="1">Belongs to the type II topoisomerase GyrA/ParC subunit family. ParC type 2 subfamily.</text>
</comment>
<comment type="sequence caution" evidence="3">
    <conflict type="erroneous initiation">
        <sequence resource="EMBL-CDS" id="BAC64323"/>
    </conflict>
    <text>Extended N-terminus.</text>
</comment>
<feature type="chain" id="PRO_0000411593" description="DNA topoisomerase 4 subunit A">
    <location>
        <begin position="1"/>
        <end position="819"/>
    </location>
</feature>
<feature type="domain" description="Topo IIA-type catalytic" evidence="2">
    <location>
        <begin position="30"/>
        <end position="496"/>
    </location>
</feature>
<feature type="active site" description="O-(5'-phospho-DNA)-tyrosine intermediate" evidence="1">
    <location>
        <position position="118"/>
    </location>
</feature>
<feature type="site" description="Interaction with DNA" evidence="1">
    <location>
        <position position="38"/>
    </location>
</feature>
<feature type="site" description="Interaction with DNA" evidence="1">
    <location>
        <position position="74"/>
    </location>
</feature>
<feature type="site" description="Interaction with DNA" evidence="1">
    <location>
        <position position="76"/>
    </location>
</feature>
<feature type="site" description="Interaction with DNA" evidence="1">
    <location>
        <position position="87"/>
    </location>
</feature>
<feature type="site" description="Interaction with DNA" evidence="1">
    <location>
        <position position="93"/>
    </location>
</feature>
<feature type="site" description="Transition state stabilizer" evidence="1">
    <location>
        <position position="117"/>
    </location>
</feature>